<comment type="function">
    <text evidence="1">Produces ATP from ADP in the presence of a proton gradient across the membrane. The catalytic sites are hosted primarily by the beta subunits.</text>
</comment>
<comment type="catalytic activity">
    <reaction evidence="1">
        <text>ATP + H2O + 4 H(+)(in) = ADP + phosphate + 5 H(+)(out)</text>
        <dbReference type="Rhea" id="RHEA:57720"/>
        <dbReference type="ChEBI" id="CHEBI:15377"/>
        <dbReference type="ChEBI" id="CHEBI:15378"/>
        <dbReference type="ChEBI" id="CHEBI:30616"/>
        <dbReference type="ChEBI" id="CHEBI:43474"/>
        <dbReference type="ChEBI" id="CHEBI:456216"/>
        <dbReference type="EC" id="7.1.2.2"/>
    </reaction>
</comment>
<comment type="subunit">
    <text evidence="1">F-type ATPases have 2 components, CF(1) - the catalytic core - and CF(0) - the membrane proton channel. CF(1) has five subunits: alpha(3), beta(3), gamma(1), delta(1), epsilon(1). CF(0) has three main subunits: a(1), b(2) and c(9-12). The alpha and beta chains form an alternating ring which encloses part of the gamma chain. CF(1) is attached to CF(0) by a central stalk formed by the gamma and epsilon chains, while a peripheral stalk is formed by the delta and b chains.</text>
</comment>
<comment type="subcellular location">
    <subcellularLocation>
        <location evidence="1">Cell inner membrane</location>
        <topology evidence="1">Peripheral membrane protein</topology>
    </subcellularLocation>
</comment>
<comment type="similarity">
    <text evidence="1">Belongs to the ATPase alpha/beta chains family.</text>
</comment>
<gene>
    <name evidence="1" type="primary">atpD</name>
    <name type="ordered locus">PputW619_5200</name>
</gene>
<organism>
    <name type="scientific">Pseudomonas putida (strain W619)</name>
    <dbReference type="NCBI Taxonomy" id="390235"/>
    <lineage>
        <taxon>Bacteria</taxon>
        <taxon>Pseudomonadati</taxon>
        <taxon>Pseudomonadota</taxon>
        <taxon>Gammaproteobacteria</taxon>
        <taxon>Pseudomonadales</taxon>
        <taxon>Pseudomonadaceae</taxon>
        <taxon>Pseudomonas</taxon>
    </lineage>
</organism>
<keyword id="KW-0066">ATP synthesis</keyword>
<keyword id="KW-0067">ATP-binding</keyword>
<keyword id="KW-0997">Cell inner membrane</keyword>
<keyword id="KW-1003">Cell membrane</keyword>
<keyword id="KW-0139">CF(1)</keyword>
<keyword id="KW-0375">Hydrogen ion transport</keyword>
<keyword id="KW-0406">Ion transport</keyword>
<keyword id="KW-0472">Membrane</keyword>
<keyword id="KW-0547">Nucleotide-binding</keyword>
<keyword id="KW-1278">Translocase</keyword>
<keyword id="KW-0813">Transport</keyword>
<accession>B1JFU1</accession>
<evidence type="ECO:0000255" key="1">
    <source>
        <dbReference type="HAMAP-Rule" id="MF_01347"/>
    </source>
</evidence>
<dbReference type="EC" id="7.1.2.2" evidence="1"/>
<dbReference type="EMBL" id="CP000949">
    <property type="protein sequence ID" value="ACA75675.1"/>
    <property type="molecule type" value="Genomic_DNA"/>
</dbReference>
<dbReference type="SMR" id="B1JFU1"/>
<dbReference type="STRING" id="390235.PputW619_5200"/>
<dbReference type="KEGG" id="ppw:PputW619_5200"/>
<dbReference type="eggNOG" id="COG0055">
    <property type="taxonomic scope" value="Bacteria"/>
</dbReference>
<dbReference type="HOGENOM" id="CLU_022398_0_2_6"/>
<dbReference type="OrthoDB" id="9801639at2"/>
<dbReference type="GO" id="GO:0005886">
    <property type="term" value="C:plasma membrane"/>
    <property type="evidence" value="ECO:0007669"/>
    <property type="project" value="UniProtKB-SubCell"/>
</dbReference>
<dbReference type="GO" id="GO:0045259">
    <property type="term" value="C:proton-transporting ATP synthase complex"/>
    <property type="evidence" value="ECO:0007669"/>
    <property type="project" value="UniProtKB-KW"/>
</dbReference>
<dbReference type="GO" id="GO:0005524">
    <property type="term" value="F:ATP binding"/>
    <property type="evidence" value="ECO:0007669"/>
    <property type="project" value="UniProtKB-UniRule"/>
</dbReference>
<dbReference type="GO" id="GO:0016887">
    <property type="term" value="F:ATP hydrolysis activity"/>
    <property type="evidence" value="ECO:0007669"/>
    <property type="project" value="InterPro"/>
</dbReference>
<dbReference type="GO" id="GO:0046933">
    <property type="term" value="F:proton-transporting ATP synthase activity, rotational mechanism"/>
    <property type="evidence" value="ECO:0007669"/>
    <property type="project" value="UniProtKB-UniRule"/>
</dbReference>
<dbReference type="CDD" id="cd18110">
    <property type="entry name" value="ATP-synt_F1_beta_C"/>
    <property type="match status" value="1"/>
</dbReference>
<dbReference type="CDD" id="cd18115">
    <property type="entry name" value="ATP-synt_F1_beta_N"/>
    <property type="match status" value="1"/>
</dbReference>
<dbReference type="CDD" id="cd01133">
    <property type="entry name" value="F1-ATPase_beta_CD"/>
    <property type="match status" value="1"/>
</dbReference>
<dbReference type="FunFam" id="1.10.1140.10:FF:000001">
    <property type="entry name" value="ATP synthase subunit beta"/>
    <property type="match status" value="1"/>
</dbReference>
<dbReference type="FunFam" id="3.40.50.300:FF:000004">
    <property type="entry name" value="ATP synthase subunit beta"/>
    <property type="match status" value="1"/>
</dbReference>
<dbReference type="Gene3D" id="2.40.10.170">
    <property type="match status" value="1"/>
</dbReference>
<dbReference type="Gene3D" id="1.10.1140.10">
    <property type="entry name" value="Bovine Mitochondrial F1-atpase, Atp Synthase Beta Chain, Chain D, domain 3"/>
    <property type="match status" value="1"/>
</dbReference>
<dbReference type="Gene3D" id="3.40.50.300">
    <property type="entry name" value="P-loop containing nucleotide triphosphate hydrolases"/>
    <property type="match status" value="1"/>
</dbReference>
<dbReference type="HAMAP" id="MF_01347">
    <property type="entry name" value="ATP_synth_beta_bact"/>
    <property type="match status" value="1"/>
</dbReference>
<dbReference type="InterPro" id="IPR003593">
    <property type="entry name" value="AAA+_ATPase"/>
</dbReference>
<dbReference type="InterPro" id="IPR055190">
    <property type="entry name" value="ATP-synt_VA_C"/>
</dbReference>
<dbReference type="InterPro" id="IPR005722">
    <property type="entry name" value="ATP_synth_F1_bsu"/>
</dbReference>
<dbReference type="InterPro" id="IPR020003">
    <property type="entry name" value="ATPase_a/bsu_AS"/>
</dbReference>
<dbReference type="InterPro" id="IPR050053">
    <property type="entry name" value="ATPase_alpha/beta_chains"/>
</dbReference>
<dbReference type="InterPro" id="IPR004100">
    <property type="entry name" value="ATPase_F1/V1/A1_a/bsu_N"/>
</dbReference>
<dbReference type="InterPro" id="IPR036121">
    <property type="entry name" value="ATPase_F1/V1/A1_a/bsu_N_sf"/>
</dbReference>
<dbReference type="InterPro" id="IPR000194">
    <property type="entry name" value="ATPase_F1/V1/A1_a/bsu_nucl-bd"/>
</dbReference>
<dbReference type="InterPro" id="IPR024034">
    <property type="entry name" value="ATPase_F1/V1_b/a_C"/>
</dbReference>
<dbReference type="InterPro" id="IPR027417">
    <property type="entry name" value="P-loop_NTPase"/>
</dbReference>
<dbReference type="NCBIfam" id="TIGR01039">
    <property type="entry name" value="atpD"/>
    <property type="match status" value="1"/>
</dbReference>
<dbReference type="PANTHER" id="PTHR15184">
    <property type="entry name" value="ATP SYNTHASE"/>
    <property type="match status" value="1"/>
</dbReference>
<dbReference type="PANTHER" id="PTHR15184:SF71">
    <property type="entry name" value="ATP SYNTHASE SUBUNIT BETA, MITOCHONDRIAL"/>
    <property type="match status" value="1"/>
</dbReference>
<dbReference type="Pfam" id="PF00006">
    <property type="entry name" value="ATP-synt_ab"/>
    <property type="match status" value="1"/>
</dbReference>
<dbReference type="Pfam" id="PF02874">
    <property type="entry name" value="ATP-synt_ab_N"/>
    <property type="match status" value="1"/>
</dbReference>
<dbReference type="Pfam" id="PF22919">
    <property type="entry name" value="ATP-synt_VA_C"/>
    <property type="match status" value="1"/>
</dbReference>
<dbReference type="SMART" id="SM00382">
    <property type="entry name" value="AAA"/>
    <property type="match status" value="1"/>
</dbReference>
<dbReference type="SUPFAM" id="SSF47917">
    <property type="entry name" value="C-terminal domain of alpha and beta subunits of F1 ATP synthase"/>
    <property type="match status" value="1"/>
</dbReference>
<dbReference type="SUPFAM" id="SSF50615">
    <property type="entry name" value="N-terminal domain of alpha and beta subunits of F1 ATP synthase"/>
    <property type="match status" value="1"/>
</dbReference>
<dbReference type="SUPFAM" id="SSF52540">
    <property type="entry name" value="P-loop containing nucleoside triphosphate hydrolases"/>
    <property type="match status" value="1"/>
</dbReference>
<dbReference type="PROSITE" id="PS00152">
    <property type="entry name" value="ATPASE_ALPHA_BETA"/>
    <property type="match status" value="1"/>
</dbReference>
<protein>
    <recommendedName>
        <fullName evidence="1">ATP synthase subunit beta</fullName>
        <ecNumber evidence="1">7.1.2.2</ecNumber>
    </recommendedName>
    <alternativeName>
        <fullName evidence="1">ATP synthase F1 sector subunit beta</fullName>
    </alternativeName>
    <alternativeName>
        <fullName evidence="1">F-ATPase subunit beta</fullName>
    </alternativeName>
</protein>
<name>ATPB_PSEPW</name>
<proteinExistence type="inferred from homology"/>
<sequence length="458" mass="49421">MSSGRIVQIIGAVIDVEFPRDGVPSVYNALKVEGAETTLEVQQQLGDGVVRTIAMGSTEGLKRGLNVIDSGAAISVPVGKATLGRIMDVLGNPIDEAGPIGEEERWGIHRDAPSFADQAGGNDLLETGIKVIDLVCPFAKGGKVGLFGGAGVGKTVNMMELIRNIAIEHSGYSVFAGVGERTREGNDFYHEMKDSNVLDKVALVYGQMNEPPGNRLRVALTGLTMAEKFRDEGNDVLLFVDNIYRYTLAGTEVSALLGRMPSAVGYQPTLAEEMGVLQERITSTKEGSITSIQAVYVPADDLTDPSPATTFAHLDATVVLSRDIASLGIYPAVDPLDSTSRQLDPNVIGNEHYETARGVQYVLQRYKELKDIIAILGMDELSESDKQLVSRARKIQRFLSQPFFVAEVFTGSPGKYVSLKDTIAGFSGILKGDYDHLPEQAFYMVGSIEEAVEKAKKL</sequence>
<feature type="chain" id="PRO_1000143534" description="ATP synthase subunit beta">
    <location>
        <begin position="1"/>
        <end position="458"/>
    </location>
</feature>
<feature type="binding site" evidence="1">
    <location>
        <begin position="148"/>
        <end position="155"/>
    </location>
    <ligand>
        <name>ATP</name>
        <dbReference type="ChEBI" id="CHEBI:30616"/>
    </ligand>
</feature>
<reference key="1">
    <citation type="submission" date="2008-02" db="EMBL/GenBank/DDBJ databases">
        <title>Complete sequence of Pseudomonas putida W619.</title>
        <authorList>
            <person name="Copeland A."/>
            <person name="Lucas S."/>
            <person name="Lapidus A."/>
            <person name="Barry K."/>
            <person name="Detter J.C."/>
            <person name="Glavina del Rio T."/>
            <person name="Dalin E."/>
            <person name="Tice H."/>
            <person name="Pitluck S."/>
            <person name="Chain P."/>
            <person name="Malfatti S."/>
            <person name="Shin M."/>
            <person name="Vergez L."/>
            <person name="Schmutz J."/>
            <person name="Larimer F."/>
            <person name="Land M."/>
            <person name="Hauser L."/>
            <person name="Kyrpides N."/>
            <person name="Kim E."/>
            <person name="Taghavi S."/>
            <person name="Vangronsveld D."/>
            <person name="van der Lelie D."/>
            <person name="Richardson P."/>
        </authorList>
    </citation>
    <scope>NUCLEOTIDE SEQUENCE [LARGE SCALE GENOMIC DNA]</scope>
    <source>
        <strain>W619</strain>
    </source>
</reference>